<gene>
    <name type="primary">LRRC45</name>
</gene>
<name>LRC45_HUMAN</name>
<protein>
    <recommendedName>
        <fullName>Leucine-rich repeat-containing protein 45</fullName>
    </recommendedName>
</protein>
<proteinExistence type="evidence at protein level"/>
<keyword id="KW-0175">Coiled coil</keyword>
<keyword id="KW-0963">Cytoplasm</keyword>
<keyword id="KW-0206">Cytoskeleton</keyword>
<keyword id="KW-0433">Leucine-rich repeat</keyword>
<keyword id="KW-0597">Phosphoprotein</keyword>
<keyword id="KW-1267">Proteomics identification</keyword>
<keyword id="KW-1185">Reference proteome</keyword>
<keyword id="KW-0677">Repeat</keyword>
<reference key="1">
    <citation type="journal article" date="2004" name="Genome Res.">
        <title>The status, quality, and expansion of the NIH full-length cDNA project: the Mammalian Gene Collection (MGC).</title>
        <authorList>
            <consortium name="The MGC Project Team"/>
        </authorList>
    </citation>
    <scope>NUCLEOTIDE SEQUENCE [LARGE SCALE MRNA]</scope>
    <source>
        <tissue>Uterus</tissue>
    </source>
</reference>
<reference key="2">
    <citation type="journal article" date="2013" name="Cell Rep.">
        <title>LRRC45 is a centrosome linker component required for centrosome cohesion.</title>
        <authorList>
            <person name="He R."/>
            <person name="Huang N."/>
            <person name="Bao Y."/>
            <person name="Zhou H."/>
            <person name="Teng J."/>
            <person name="Chen J."/>
        </authorList>
    </citation>
    <scope>SUBUNIT</scope>
    <scope>INTERACTION WITH CROCC AND CEP250</scope>
    <scope>SUBCELLULAR LOCATION</scope>
    <scope>PHOSPHORYLATION AT SER-661</scope>
</reference>
<reference key="3">
    <citation type="journal article" date="2018" name="J. Cell Sci.">
        <title>CCDC102B functions in centrosome linker assembly and centrosome cohesion.</title>
        <authorList>
            <person name="Xia Y."/>
            <person name="Huang N."/>
            <person name="Chen Z."/>
            <person name="Li F."/>
            <person name="Fan G."/>
            <person name="Ma D."/>
            <person name="Chen J."/>
            <person name="Teng J."/>
        </authorList>
    </citation>
    <scope>INTERACTION WITH CCDC102B</scope>
</reference>
<reference key="4">
    <citation type="journal article" date="2020" name="J. Cell Sci.">
        <title>Cep44 functions in centrosome cohesion by stabilizing rootletin.</title>
        <authorList>
            <person name="Hossain D."/>
            <person name="Shih S.Y."/>
            <person name="Xiao X."/>
            <person name="White J."/>
            <person name="Tsang W.Y."/>
        </authorList>
    </citation>
    <scope>INTERACTION WITH CEP44</scope>
    <scope>SUBCELLULAR LOCATION</scope>
</reference>
<organism>
    <name type="scientific">Homo sapiens</name>
    <name type="common">Human</name>
    <dbReference type="NCBI Taxonomy" id="9606"/>
    <lineage>
        <taxon>Eukaryota</taxon>
        <taxon>Metazoa</taxon>
        <taxon>Chordata</taxon>
        <taxon>Craniata</taxon>
        <taxon>Vertebrata</taxon>
        <taxon>Euteleostomi</taxon>
        <taxon>Mammalia</taxon>
        <taxon>Eutheria</taxon>
        <taxon>Euarchontoglires</taxon>
        <taxon>Primates</taxon>
        <taxon>Haplorrhini</taxon>
        <taxon>Catarrhini</taxon>
        <taxon>Hominidae</taxon>
        <taxon>Homo</taxon>
    </lineage>
</organism>
<feature type="chain" id="PRO_0000223923" description="Leucine-rich repeat-containing protein 45">
    <location>
        <begin position="1"/>
        <end position="670"/>
    </location>
</feature>
<feature type="repeat" description="LRR 1">
    <location>
        <begin position="58"/>
        <end position="80"/>
    </location>
</feature>
<feature type="repeat" description="LRR 2">
    <location>
        <begin position="87"/>
        <end position="107"/>
    </location>
</feature>
<feature type="repeat" description="LRR 3">
    <location>
        <begin position="115"/>
        <end position="136"/>
    </location>
</feature>
<feature type="repeat" description="LRR 4">
    <location>
        <begin position="145"/>
        <end position="166"/>
    </location>
</feature>
<feature type="repeat" description="LRR 5">
    <location>
        <begin position="173"/>
        <end position="194"/>
    </location>
</feature>
<feature type="repeat" description="LRR 6">
    <location>
        <begin position="201"/>
        <end position="212"/>
    </location>
</feature>
<feature type="coiled-coil region" evidence="1">
    <location>
        <begin position="252"/>
        <end position="645"/>
    </location>
</feature>
<feature type="modified residue" description="Phosphoserine; by NEK2" evidence="2">
    <location>
        <position position="661"/>
    </location>
</feature>
<accession>Q96CN5</accession>
<sequence length="670" mass="75951">MEEFRRSYSRLCRESGAEPQEAVLQQLHQLPRGRLDLATQSLTVETCRALGKLLPRETLCTELVLSDCMLSEEGATLLLRGLCANTVLRFLDLKGNNLRAAGAEALGKLLQQNKSIQSLTLEWNSLGTWDDAFATFCGGLAANGALQRLDLRNNQISHKGAEELALALKGNTTLQQLDLRWNNVGLLGGRALMNCLPSNRTLWRLDLAGNNIPGDVLRAVEQAMGHSQDRLTTFQENQARTHVLSKEVQHLREEKSKQFLDLMETIDKQREEMAKSSRASAARVGQLQEALNERHSIINALKAKLQMTEAALALSEQKAQDLGELLATAEQEQLSLSQRQAKELKLEQQEAAERESKLLRDLSAANEKNLLLQNQVDELERKFRCQQEQLFQTRQEMTSMSAELKMRAIQAEERLDMEKRRCRQSLEDSESLRIKEVEHMTRHLEESEKAMQERVQRLEAARLSLEEELSRVKAAALSERGQAEEELIKAKSQARLEEQQRLAHLEDKLRLLAQARDEAQGACLQQKQVVAEAQTRVSQLGLQVEGLRRRLEELQQELSLKDQERVAEVSRVRVELQEQNGRLQAELAAQEALREKAAALERQLKVMASDHREALLDRESENASLREKLRLREAEIARIRDEEAQRASFLQNAVLAYVQASPVRTLSPPK</sequence>
<dbReference type="EMBL" id="BC014109">
    <property type="protein sequence ID" value="AAH14109.1"/>
    <property type="molecule type" value="mRNA"/>
</dbReference>
<dbReference type="CCDS" id="CCDS11797.1"/>
<dbReference type="RefSeq" id="NP_659436.1">
    <property type="nucleotide sequence ID" value="NM_144999.4"/>
</dbReference>
<dbReference type="SMR" id="Q96CN5"/>
<dbReference type="BioGRID" id="128377">
    <property type="interactions" value="32"/>
</dbReference>
<dbReference type="DIP" id="DIP-29482N"/>
<dbReference type="FunCoup" id="Q96CN5">
    <property type="interactions" value="654"/>
</dbReference>
<dbReference type="IntAct" id="Q96CN5">
    <property type="interactions" value="25"/>
</dbReference>
<dbReference type="MINT" id="Q96CN5"/>
<dbReference type="STRING" id="9606.ENSP00000306760"/>
<dbReference type="iPTMnet" id="Q96CN5"/>
<dbReference type="PhosphoSitePlus" id="Q96CN5"/>
<dbReference type="BioMuta" id="LRRC45"/>
<dbReference type="DMDM" id="74760765"/>
<dbReference type="jPOST" id="Q96CN5"/>
<dbReference type="MassIVE" id="Q96CN5"/>
<dbReference type="PaxDb" id="9606-ENSP00000306760"/>
<dbReference type="PeptideAtlas" id="Q96CN5"/>
<dbReference type="ProteomicsDB" id="76198"/>
<dbReference type="Pumba" id="Q96CN5"/>
<dbReference type="Antibodypedia" id="19866">
    <property type="antibodies" value="108 antibodies from 20 providers"/>
</dbReference>
<dbReference type="DNASU" id="201255"/>
<dbReference type="Ensembl" id="ENST00000306688.8">
    <property type="protein sequence ID" value="ENSP00000306760.3"/>
    <property type="gene ID" value="ENSG00000169683.8"/>
</dbReference>
<dbReference type="GeneID" id="201255"/>
<dbReference type="KEGG" id="hsa:201255"/>
<dbReference type="MANE-Select" id="ENST00000306688.8">
    <property type="protein sequence ID" value="ENSP00000306760.3"/>
    <property type="RefSeq nucleotide sequence ID" value="NM_144999.4"/>
    <property type="RefSeq protein sequence ID" value="NP_659436.1"/>
</dbReference>
<dbReference type="UCSC" id="uc002kde.4">
    <property type="organism name" value="human"/>
</dbReference>
<dbReference type="AGR" id="HGNC:28302"/>
<dbReference type="CTD" id="201255"/>
<dbReference type="DisGeNET" id="201255"/>
<dbReference type="GeneCards" id="LRRC45"/>
<dbReference type="HGNC" id="HGNC:28302">
    <property type="gene designation" value="LRRC45"/>
</dbReference>
<dbReference type="HPA" id="ENSG00000169683">
    <property type="expression patterns" value="Low tissue specificity"/>
</dbReference>
<dbReference type="MalaCards" id="LRRC45"/>
<dbReference type="neXtProt" id="NX_Q96CN5"/>
<dbReference type="OpenTargets" id="ENSG00000169683"/>
<dbReference type="PharmGKB" id="PA142671505"/>
<dbReference type="VEuPathDB" id="HostDB:ENSG00000169683"/>
<dbReference type="eggNOG" id="KOG4308">
    <property type="taxonomic scope" value="Eukaryota"/>
</dbReference>
<dbReference type="GeneTree" id="ENSGT00940000154003"/>
<dbReference type="HOGENOM" id="CLU_015877_0_0_1"/>
<dbReference type="InParanoid" id="Q96CN5"/>
<dbReference type="OMA" id="EVDHMTR"/>
<dbReference type="OrthoDB" id="8436363at2759"/>
<dbReference type="PAN-GO" id="Q96CN5">
    <property type="GO annotations" value="1 GO annotation based on evolutionary models"/>
</dbReference>
<dbReference type="PhylomeDB" id="Q96CN5"/>
<dbReference type="TreeFam" id="TF330983"/>
<dbReference type="PathwayCommons" id="Q96CN5"/>
<dbReference type="SignaLink" id="Q96CN5"/>
<dbReference type="SIGNOR" id="Q96CN5"/>
<dbReference type="BioGRID-ORCS" id="201255">
    <property type="hits" value="14 hits in 1151 CRISPR screens"/>
</dbReference>
<dbReference type="ChiTaRS" id="LRRC45">
    <property type="organism name" value="human"/>
</dbReference>
<dbReference type="GenomeRNAi" id="201255"/>
<dbReference type="Pharos" id="Q96CN5">
    <property type="development level" value="Tdark"/>
</dbReference>
<dbReference type="PRO" id="PR:Q96CN5"/>
<dbReference type="Proteomes" id="UP000005640">
    <property type="component" value="Chromosome 17"/>
</dbReference>
<dbReference type="RNAct" id="Q96CN5">
    <property type="molecule type" value="protein"/>
</dbReference>
<dbReference type="Bgee" id="ENSG00000169683">
    <property type="expression patterns" value="Expressed in right uterine tube and 98 other cell types or tissues"/>
</dbReference>
<dbReference type="ExpressionAtlas" id="Q96CN5">
    <property type="expression patterns" value="baseline and differential"/>
</dbReference>
<dbReference type="GO" id="GO:0005813">
    <property type="term" value="C:centrosome"/>
    <property type="evidence" value="ECO:0000314"/>
    <property type="project" value="UniProtKB"/>
</dbReference>
<dbReference type="GO" id="GO:0036064">
    <property type="term" value="C:ciliary basal body"/>
    <property type="evidence" value="ECO:0000314"/>
    <property type="project" value="HPA"/>
</dbReference>
<dbReference type="GO" id="GO:0005829">
    <property type="term" value="C:cytosol"/>
    <property type="evidence" value="ECO:0000314"/>
    <property type="project" value="HPA"/>
</dbReference>
<dbReference type="GO" id="GO:0005886">
    <property type="term" value="C:plasma membrane"/>
    <property type="evidence" value="ECO:0000314"/>
    <property type="project" value="HPA"/>
</dbReference>
<dbReference type="FunFam" id="3.80.10.10:FF:000396">
    <property type="entry name" value="Leucine-rich repeat-containing protein 45"/>
    <property type="match status" value="1"/>
</dbReference>
<dbReference type="FunFam" id="3.80.10.10:FF:000459">
    <property type="entry name" value="Leucine-rich repeat-containing protein 45"/>
    <property type="match status" value="1"/>
</dbReference>
<dbReference type="Gene3D" id="3.80.10.10">
    <property type="entry name" value="Ribonuclease Inhibitor"/>
    <property type="match status" value="2"/>
</dbReference>
<dbReference type="InterPro" id="IPR052116">
    <property type="entry name" value="Centro_Cilium_Assembly"/>
</dbReference>
<dbReference type="InterPro" id="IPR001611">
    <property type="entry name" value="Leu-rich_rpt"/>
</dbReference>
<dbReference type="InterPro" id="IPR032675">
    <property type="entry name" value="LRR_dom_sf"/>
</dbReference>
<dbReference type="PANTHER" id="PTHR23170:SF3">
    <property type="entry name" value="LEUCINE-RICH REPEAT-CONTAINING PROTEIN 45"/>
    <property type="match status" value="1"/>
</dbReference>
<dbReference type="PANTHER" id="PTHR23170">
    <property type="entry name" value="NY-REN-58 ANTIGEN"/>
    <property type="match status" value="1"/>
</dbReference>
<dbReference type="Pfam" id="PF13516">
    <property type="entry name" value="LRR_6"/>
    <property type="match status" value="3"/>
</dbReference>
<dbReference type="SMART" id="SM00368">
    <property type="entry name" value="LRR_RI"/>
    <property type="match status" value="5"/>
</dbReference>
<dbReference type="SUPFAM" id="SSF52047">
    <property type="entry name" value="RNI-like"/>
    <property type="match status" value="1"/>
</dbReference>
<evidence type="ECO:0000255" key="1"/>
<evidence type="ECO:0000269" key="2">
    <source>
    </source>
</evidence>
<evidence type="ECO:0000269" key="3">
    <source>
    </source>
</evidence>
<evidence type="ECO:0000269" key="4">
    <source>
    </source>
</evidence>
<comment type="function">
    <text evidence="2">Component of the proteinaceous fiber-like linker between two centrioles, required for centrosome cohesion.</text>
</comment>
<comment type="subunit">
    <text evidence="2 3 4">Homomer (PubMed:24035387). Interacts with CROCC/rootletin and CEP250 (PubMed:24035387). Interacts with CEP44 (PubMed:31974111). Interacts with CCDC102B (via N-terminus) (PubMed:30404835).</text>
</comment>
<comment type="interaction">
    <interactant intactId="EBI-2805176">
        <id>Q96CN5</id>
    </interactant>
    <interactant intactId="EBI-3905054">
        <id>P13196</id>
        <label>ALAS1</label>
    </interactant>
    <organismsDiffer>false</organismsDiffer>
    <experiments>3</experiments>
</comment>
<comment type="interaction">
    <interactant intactId="EBI-2805176">
        <id>Q96CN5</id>
    </interactant>
    <interactant intactId="EBI-12814117">
        <id>Q8N998</id>
        <label>CCDC89</label>
    </interactant>
    <organismsDiffer>false</organismsDiffer>
    <experiments>3</experiments>
</comment>
<comment type="interaction">
    <interactant intactId="EBI-2805176">
        <id>Q96CN5</id>
    </interactant>
    <interactant intactId="EBI-466029">
        <id>P42858</id>
        <label>HTT</label>
    </interactant>
    <organismsDiffer>false</organismsDiffer>
    <experiments>3</experiments>
</comment>
<comment type="interaction">
    <interactant intactId="EBI-2805176">
        <id>Q96CN5</id>
    </interactant>
    <interactant intactId="EBI-739657">
        <id>Q9BQD3</id>
        <label>KXD1</label>
    </interactant>
    <organismsDiffer>false</organismsDiffer>
    <experiments>4</experiments>
</comment>
<comment type="interaction">
    <interactant intactId="EBI-2805176">
        <id>Q96CN5</id>
    </interactant>
    <interactant intactId="EBI-307531">
        <id>P23508</id>
        <label>MCC</label>
    </interactant>
    <organismsDiffer>false</organismsDiffer>
    <experiments>3</experiments>
</comment>
<comment type="interaction">
    <interactant intactId="EBI-2805176">
        <id>Q96CN5</id>
    </interactant>
    <interactant intactId="EBI-10172526">
        <id>Q9UJV3-2</id>
        <label>MID2</label>
    </interactant>
    <organismsDiffer>false</organismsDiffer>
    <experiments>3</experiments>
</comment>
<comment type="interaction">
    <interactant intactId="EBI-2805176">
        <id>Q96CN5</id>
    </interactant>
    <interactant intactId="EBI-17564583">
        <id>Q16385-2</id>
        <label>SSX2B</label>
    </interactant>
    <organismsDiffer>false</organismsDiffer>
    <experiments>3</experiments>
</comment>
<comment type="interaction">
    <interactant intactId="EBI-2805176">
        <id>Q96CN5</id>
    </interactant>
    <interactant intactId="EBI-12879730">
        <id>Q7RTT5</id>
        <label>SSX7</label>
    </interactant>
    <organismsDiffer>false</organismsDiffer>
    <experiments>3</experiments>
</comment>
<comment type="subcellular location">
    <subcellularLocation>
        <location evidence="2 4">Cytoplasm</location>
        <location evidence="2 4">Cytoskeleton</location>
        <location evidence="2 4">Microtubule organizing center</location>
        <location evidence="2 4">Centrosome</location>
    </subcellularLocation>
    <text evidence="2">Localizes to the proteinaceous linker between the proximal ends of the centrioles.</text>
</comment>
<comment type="PTM">
    <text evidence="2">Phosphorylated by NEK2 during misosis, phosphorylation reduces centrosomal localization which subsequently leads to centrosome separation.</text>
</comment>